<feature type="chain" id="PRO_0000427919" description="Divalent metal cation transporter MntH">
    <location>
        <begin position="1"/>
        <end position="428"/>
    </location>
</feature>
<feature type="transmembrane region" description="Helical" evidence="1">
    <location>
        <begin position="33"/>
        <end position="53"/>
    </location>
</feature>
<feature type="transmembrane region" description="Helical" evidence="1">
    <location>
        <begin position="60"/>
        <end position="80"/>
    </location>
</feature>
<feature type="transmembrane region" description="Helical" evidence="1">
    <location>
        <begin position="114"/>
        <end position="134"/>
    </location>
</feature>
<feature type="transmembrane region" description="Helical" evidence="1">
    <location>
        <begin position="136"/>
        <end position="156"/>
    </location>
</feature>
<feature type="transmembrane region" description="Helical" evidence="1">
    <location>
        <begin position="171"/>
        <end position="191"/>
    </location>
</feature>
<feature type="transmembrane region" description="Helical" evidence="1">
    <location>
        <begin position="210"/>
        <end position="230"/>
    </location>
</feature>
<feature type="transmembrane region" description="Helical" evidence="1">
    <location>
        <begin position="258"/>
        <end position="278"/>
    </location>
</feature>
<feature type="transmembrane region" description="Helical" evidence="1">
    <location>
        <begin position="299"/>
        <end position="319"/>
    </location>
</feature>
<feature type="transmembrane region" description="Helical" evidence="1">
    <location>
        <begin position="334"/>
        <end position="356"/>
    </location>
</feature>
<feature type="transmembrane region" description="Helical" evidence="1">
    <location>
        <begin position="365"/>
        <end position="385"/>
    </location>
</feature>
<feature type="transmembrane region" description="Helical" evidence="1">
    <location>
        <begin position="406"/>
        <end position="426"/>
    </location>
</feature>
<evidence type="ECO:0000255" key="1">
    <source>
        <dbReference type="HAMAP-Rule" id="MF_00221"/>
    </source>
</evidence>
<evidence type="ECO:0000305" key="2"/>
<reference key="1">
    <citation type="journal article" date="2002" name="J. Bacteriol.">
        <title>Whole-genome comparison of Mycobacterium tuberculosis clinical and laboratory strains.</title>
        <authorList>
            <person name="Fleischmann R.D."/>
            <person name="Alland D."/>
            <person name="Eisen J.A."/>
            <person name="Carpenter L."/>
            <person name="White O."/>
            <person name="Peterson J.D."/>
            <person name="DeBoy R.T."/>
            <person name="Dodson R.J."/>
            <person name="Gwinn M.L."/>
            <person name="Haft D.H."/>
            <person name="Hickey E.K."/>
            <person name="Kolonay J.F."/>
            <person name="Nelson W.C."/>
            <person name="Umayam L.A."/>
            <person name="Ermolaeva M.D."/>
            <person name="Salzberg S.L."/>
            <person name="Delcher A."/>
            <person name="Utterback T.R."/>
            <person name="Weidman J.F."/>
            <person name="Khouri H.M."/>
            <person name="Gill J."/>
            <person name="Mikula A."/>
            <person name="Bishai W."/>
            <person name="Jacobs W.R. Jr."/>
            <person name="Venter J.C."/>
            <person name="Fraser C.M."/>
        </authorList>
    </citation>
    <scope>NUCLEOTIDE SEQUENCE [LARGE SCALE GENOMIC DNA]</scope>
    <source>
        <strain>CDC 1551 / Oshkosh</strain>
    </source>
</reference>
<proteinExistence type="inferred from homology"/>
<name>MNTH_MYCTO</name>
<comment type="function">
    <text evidence="1">H(+)-stimulated, divalent metal cation uptake system. Transports zinc and iron. Can also interact with manganese and copper (By similarity).</text>
</comment>
<comment type="subcellular location">
    <subcellularLocation>
        <location evidence="1">Cell membrane</location>
        <topology evidence="1">Multi-pass membrane protein</topology>
    </subcellularLocation>
</comment>
<comment type="similarity">
    <text evidence="1">Belongs to the NRAMP family.</text>
</comment>
<comment type="sequence caution" evidence="2">
    <conflict type="erroneous initiation">
        <sequence resource="EMBL-CDS" id="AAK45198"/>
    </conflict>
    <text>Extended N-terminus.</text>
</comment>
<protein>
    <recommendedName>
        <fullName evidence="1">Divalent metal cation transporter MntH</fullName>
    </recommendedName>
    <alternativeName>
        <fullName>Mramp</fullName>
    </alternativeName>
</protein>
<organism>
    <name type="scientific">Mycobacterium tuberculosis (strain CDC 1551 / Oshkosh)</name>
    <dbReference type="NCBI Taxonomy" id="83331"/>
    <lineage>
        <taxon>Bacteria</taxon>
        <taxon>Bacillati</taxon>
        <taxon>Actinomycetota</taxon>
        <taxon>Actinomycetes</taxon>
        <taxon>Mycobacteriales</taxon>
        <taxon>Mycobacteriaceae</taxon>
        <taxon>Mycobacterium</taxon>
        <taxon>Mycobacterium tuberculosis complex</taxon>
    </lineage>
</organism>
<accession>P9WIZ4</accession>
<accession>L0T844</accession>
<accession>O05916</accession>
<gene>
    <name evidence="1" type="primary">mntH</name>
    <name type="ordered locus">MT0951</name>
</gene>
<sequence length="428" mass="45004">MAGEFRLLSHLCSRGSKVGELAQDTRTSLKTSWYLLGPAFVAAIAYVDPGNVAANVSSGAQFGYLLLWVIVAANVMAALVQYLSAKLGLVTGRSLPEAIGKRMGRPARLAYWAQAEIVAMATDVAEVIGGAIALRIMFNLPLPIGGIITGVVSLLLLTIQDRRGQRLFERVITALLLVIAIGFTASFFVVTPPPNAVLGGLAPRFQGTESVLLAAAIMGATVMPHAVYLHSGLARDRHGHPDPGPQRRRLLRVTRWDVGLAMLIAGGVNAAMLLVAALNMRGRGDTASIEGAYHAVHDTLGATIAVLFAVGLLASGLASSSVGAYAGAMIMQGLLHWSVPMLVRRLITLGPALAILTLGFDPTRTLVLSQVVLSFGIPFAVLPLVKLTGSPAVMGGDTNHRATTWVGWVVAVMVSLLNVMLIYLTVTG</sequence>
<dbReference type="EMBL" id="AE000516">
    <property type="protein sequence ID" value="AAK45198.1"/>
    <property type="status" value="ALT_INIT"/>
    <property type="molecule type" value="Genomic_DNA"/>
</dbReference>
<dbReference type="PIR" id="D70583">
    <property type="entry name" value="D70583"/>
</dbReference>
<dbReference type="RefSeq" id="WP_003898649.1">
    <property type="nucleotide sequence ID" value="NZ_KK341227.1"/>
</dbReference>
<dbReference type="SMR" id="P9WIZ4"/>
<dbReference type="KEGG" id="mtc:MT0951"/>
<dbReference type="PATRIC" id="fig|83331.31.peg.1021"/>
<dbReference type="HOGENOM" id="CLU_020088_2_0_11"/>
<dbReference type="Proteomes" id="UP000001020">
    <property type="component" value="Chromosome"/>
</dbReference>
<dbReference type="GO" id="GO:0005886">
    <property type="term" value="C:plasma membrane"/>
    <property type="evidence" value="ECO:0007669"/>
    <property type="project" value="UniProtKB-SubCell"/>
</dbReference>
<dbReference type="GO" id="GO:0015086">
    <property type="term" value="F:cadmium ion transmembrane transporter activity"/>
    <property type="evidence" value="ECO:0007669"/>
    <property type="project" value="TreeGrafter"/>
</dbReference>
<dbReference type="GO" id="GO:0005384">
    <property type="term" value="F:manganese ion transmembrane transporter activity"/>
    <property type="evidence" value="ECO:0007669"/>
    <property type="project" value="TreeGrafter"/>
</dbReference>
<dbReference type="GO" id="GO:0046872">
    <property type="term" value="F:metal ion binding"/>
    <property type="evidence" value="ECO:0007669"/>
    <property type="project" value="UniProtKB-UniRule"/>
</dbReference>
<dbReference type="GO" id="GO:0015293">
    <property type="term" value="F:symporter activity"/>
    <property type="evidence" value="ECO:0007669"/>
    <property type="project" value="UniProtKB-UniRule"/>
</dbReference>
<dbReference type="GO" id="GO:0034755">
    <property type="term" value="P:iron ion transmembrane transport"/>
    <property type="evidence" value="ECO:0007669"/>
    <property type="project" value="TreeGrafter"/>
</dbReference>
<dbReference type="HAMAP" id="MF_00221">
    <property type="entry name" value="NRAMP"/>
    <property type="match status" value="1"/>
</dbReference>
<dbReference type="InterPro" id="IPR001046">
    <property type="entry name" value="NRAMP_fam"/>
</dbReference>
<dbReference type="NCBIfam" id="TIGR01197">
    <property type="entry name" value="nramp"/>
    <property type="match status" value="1"/>
</dbReference>
<dbReference type="NCBIfam" id="NF037982">
    <property type="entry name" value="Nramp_1"/>
    <property type="match status" value="1"/>
</dbReference>
<dbReference type="NCBIfam" id="NF001923">
    <property type="entry name" value="PRK00701.1"/>
    <property type="match status" value="1"/>
</dbReference>
<dbReference type="PANTHER" id="PTHR11706:SF33">
    <property type="entry name" value="NATURAL RESISTANCE-ASSOCIATED MACROPHAGE PROTEIN 2"/>
    <property type="match status" value="1"/>
</dbReference>
<dbReference type="PANTHER" id="PTHR11706">
    <property type="entry name" value="SOLUTE CARRIER PROTEIN FAMILY 11 MEMBER"/>
    <property type="match status" value="1"/>
</dbReference>
<dbReference type="Pfam" id="PF01566">
    <property type="entry name" value="Nramp"/>
    <property type="match status" value="1"/>
</dbReference>
<dbReference type="PRINTS" id="PR00447">
    <property type="entry name" value="NATRESASSCMP"/>
</dbReference>
<keyword id="KW-1003">Cell membrane</keyword>
<keyword id="KW-0406">Ion transport</keyword>
<keyword id="KW-0408">Iron</keyword>
<keyword id="KW-0472">Membrane</keyword>
<keyword id="KW-1185">Reference proteome</keyword>
<keyword id="KW-0769">Symport</keyword>
<keyword id="KW-0812">Transmembrane</keyword>
<keyword id="KW-1133">Transmembrane helix</keyword>
<keyword id="KW-0813">Transport</keyword>
<keyword id="KW-0862">Zinc</keyword>